<sequence length="430" mass="47458">MTSVVVVGTQWGDEGKGKITDFLSADAEVIARYQGGDNAGHTIVIDGKKFKLHLIPSGIFFPEKISVIGNGVVVNPKSLVKELAYLHEEGITTDNLRISDRAHVILPYHIKLDQLQEDAKGDNKIGTTIKGIGPAYMDKAARVGIRIADLLDKEIFAERLRINLAEKNRLFEKMYDSEALDFDSIFEEYYAYGQEIKKYVTDTSVILNDALDAGKRVLFEGAQGVMLDIDQGTYPFVTSSNPVAGGVTIGSGVGPSKINKVVGVCKAYTSRVGDGPFPTELFDEVGDRIREVGHEYGTTTGRPRRVGWFDSVVMRHSRRVSGITNLSLNSIDVLSGLDTVKICVAYDLDGERIDYYPASLEQLKRCKPIYEELPGWSEDITGVRSLDDLPENARNYVRRVSELVGVRISTFSVGPGREQTNILESVWANI</sequence>
<accession>B9DT31</accession>
<reference key="1">
    <citation type="journal article" date="2009" name="BMC Genomics">
        <title>Evidence for niche adaptation in the genome of the bovine pathogen Streptococcus uberis.</title>
        <authorList>
            <person name="Ward P.N."/>
            <person name="Holden M.T.G."/>
            <person name="Leigh J.A."/>
            <person name="Lennard N."/>
            <person name="Bignell A."/>
            <person name="Barron A."/>
            <person name="Clark L."/>
            <person name="Quail M.A."/>
            <person name="Woodward J."/>
            <person name="Barrell B.G."/>
            <person name="Egan S.A."/>
            <person name="Field T.R."/>
            <person name="Maskell D."/>
            <person name="Kehoe M."/>
            <person name="Dowson C.G."/>
            <person name="Chanter N."/>
            <person name="Whatmore A.M."/>
            <person name="Bentley S.D."/>
            <person name="Parkhill J."/>
        </authorList>
    </citation>
    <scope>NUCLEOTIDE SEQUENCE [LARGE SCALE GENOMIC DNA]</scope>
    <source>
        <strain>ATCC BAA-854 / 0140J</strain>
    </source>
</reference>
<keyword id="KW-0963">Cytoplasm</keyword>
<keyword id="KW-0342">GTP-binding</keyword>
<keyword id="KW-0436">Ligase</keyword>
<keyword id="KW-0460">Magnesium</keyword>
<keyword id="KW-0479">Metal-binding</keyword>
<keyword id="KW-0547">Nucleotide-binding</keyword>
<keyword id="KW-0658">Purine biosynthesis</keyword>
<keyword id="KW-1185">Reference proteome</keyword>
<gene>
    <name evidence="1" type="primary">purA</name>
    <name type="ordered locus">SUB0152</name>
</gene>
<comment type="function">
    <text evidence="1">Plays an important role in the de novo pathway of purine nucleotide biosynthesis. Catalyzes the first committed step in the biosynthesis of AMP from IMP.</text>
</comment>
<comment type="catalytic activity">
    <reaction evidence="1">
        <text>IMP + L-aspartate + GTP = N(6)-(1,2-dicarboxyethyl)-AMP + GDP + phosphate + 2 H(+)</text>
        <dbReference type="Rhea" id="RHEA:15753"/>
        <dbReference type="ChEBI" id="CHEBI:15378"/>
        <dbReference type="ChEBI" id="CHEBI:29991"/>
        <dbReference type="ChEBI" id="CHEBI:37565"/>
        <dbReference type="ChEBI" id="CHEBI:43474"/>
        <dbReference type="ChEBI" id="CHEBI:57567"/>
        <dbReference type="ChEBI" id="CHEBI:58053"/>
        <dbReference type="ChEBI" id="CHEBI:58189"/>
        <dbReference type="EC" id="6.3.4.4"/>
    </reaction>
</comment>
<comment type="cofactor">
    <cofactor evidence="1">
        <name>Mg(2+)</name>
        <dbReference type="ChEBI" id="CHEBI:18420"/>
    </cofactor>
    <text evidence="1">Binds 1 Mg(2+) ion per subunit.</text>
</comment>
<comment type="pathway">
    <text evidence="1">Purine metabolism; AMP biosynthesis via de novo pathway; AMP from IMP: step 1/2.</text>
</comment>
<comment type="subunit">
    <text evidence="1">Homodimer.</text>
</comment>
<comment type="subcellular location">
    <subcellularLocation>
        <location evidence="1">Cytoplasm</location>
    </subcellularLocation>
</comment>
<comment type="similarity">
    <text evidence="1">Belongs to the adenylosuccinate synthetase family.</text>
</comment>
<protein>
    <recommendedName>
        <fullName evidence="1">Adenylosuccinate synthetase</fullName>
        <shortName evidence="1">AMPSase</shortName>
        <shortName evidence="1">AdSS</shortName>
        <ecNumber evidence="1">6.3.4.4</ecNumber>
    </recommendedName>
    <alternativeName>
        <fullName evidence="1">IMP--aspartate ligase</fullName>
    </alternativeName>
</protein>
<evidence type="ECO:0000255" key="1">
    <source>
        <dbReference type="HAMAP-Rule" id="MF_00011"/>
    </source>
</evidence>
<proteinExistence type="inferred from homology"/>
<name>PURA_STRU0</name>
<dbReference type="EC" id="6.3.4.4" evidence="1"/>
<dbReference type="EMBL" id="AM946015">
    <property type="protein sequence ID" value="CAR40590.1"/>
    <property type="molecule type" value="Genomic_DNA"/>
</dbReference>
<dbReference type="RefSeq" id="WP_012657706.1">
    <property type="nucleotide sequence ID" value="NC_012004.1"/>
</dbReference>
<dbReference type="SMR" id="B9DT31"/>
<dbReference type="STRING" id="218495.SUB0152"/>
<dbReference type="KEGG" id="sub:SUB0152"/>
<dbReference type="eggNOG" id="COG0104">
    <property type="taxonomic scope" value="Bacteria"/>
</dbReference>
<dbReference type="HOGENOM" id="CLU_029848_0_0_9"/>
<dbReference type="OrthoDB" id="9807553at2"/>
<dbReference type="UniPathway" id="UPA00075">
    <property type="reaction ID" value="UER00335"/>
</dbReference>
<dbReference type="Proteomes" id="UP000000449">
    <property type="component" value="Chromosome"/>
</dbReference>
<dbReference type="GO" id="GO:0005737">
    <property type="term" value="C:cytoplasm"/>
    <property type="evidence" value="ECO:0007669"/>
    <property type="project" value="UniProtKB-SubCell"/>
</dbReference>
<dbReference type="GO" id="GO:0004019">
    <property type="term" value="F:adenylosuccinate synthase activity"/>
    <property type="evidence" value="ECO:0007669"/>
    <property type="project" value="UniProtKB-UniRule"/>
</dbReference>
<dbReference type="GO" id="GO:0005525">
    <property type="term" value="F:GTP binding"/>
    <property type="evidence" value="ECO:0007669"/>
    <property type="project" value="UniProtKB-UniRule"/>
</dbReference>
<dbReference type="GO" id="GO:0000287">
    <property type="term" value="F:magnesium ion binding"/>
    <property type="evidence" value="ECO:0007669"/>
    <property type="project" value="UniProtKB-UniRule"/>
</dbReference>
<dbReference type="GO" id="GO:0044208">
    <property type="term" value="P:'de novo' AMP biosynthetic process"/>
    <property type="evidence" value="ECO:0007669"/>
    <property type="project" value="UniProtKB-UniRule"/>
</dbReference>
<dbReference type="GO" id="GO:0046040">
    <property type="term" value="P:IMP metabolic process"/>
    <property type="evidence" value="ECO:0007669"/>
    <property type="project" value="TreeGrafter"/>
</dbReference>
<dbReference type="CDD" id="cd03108">
    <property type="entry name" value="AdSS"/>
    <property type="match status" value="1"/>
</dbReference>
<dbReference type="FunFam" id="1.10.300.10:FF:000001">
    <property type="entry name" value="Adenylosuccinate synthetase"/>
    <property type="match status" value="1"/>
</dbReference>
<dbReference type="FunFam" id="3.90.170.10:FF:000001">
    <property type="entry name" value="Adenylosuccinate synthetase"/>
    <property type="match status" value="1"/>
</dbReference>
<dbReference type="Gene3D" id="3.40.440.10">
    <property type="entry name" value="Adenylosuccinate Synthetase, subunit A, domain 1"/>
    <property type="match status" value="1"/>
</dbReference>
<dbReference type="Gene3D" id="1.10.300.10">
    <property type="entry name" value="Adenylosuccinate Synthetase, subunit A, domain 2"/>
    <property type="match status" value="1"/>
</dbReference>
<dbReference type="Gene3D" id="3.90.170.10">
    <property type="entry name" value="Adenylosuccinate Synthetase, subunit A, domain 3"/>
    <property type="match status" value="1"/>
</dbReference>
<dbReference type="HAMAP" id="MF_00011">
    <property type="entry name" value="Adenylosucc_synth"/>
    <property type="match status" value="1"/>
</dbReference>
<dbReference type="InterPro" id="IPR018220">
    <property type="entry name" value="Adenylosuccin_syn_GTP-bd"/>
</dbReference>
<dbReference type="InterPro" id="IPR033128">
    <property type="entry name" value="Adenylosuccin_syn_Lys_AS"/>
</dbReference>
<dbReference type="InterPro" id="IPR042109">
    <property type="entry name" value="Adenylosuccinate_synth_dom1"/>
</dbReference>
<dbReference type="InterPro" id="IPR042110">
    <property type="entry name" value="Adenylosuccinate_synth_dom2"/>
</dbReference>
<dbReference type="InterPro" id="IPR042111">
    <property type="entry name" value="Adenylosuccinate_synth_dom3"/>
</dbReference>
<dbReference type="InterPro" id="IPR001114">
    <property type="entry name" value="Adenylosuccinate_synthetase"/>
</dbReference>
<dbReference type="InterPro" id="IPR027417">
    <property type="entry name" value="P-loop_NTPase"/>
</dbReference>
<dbReference type="NCBIfam" id="NF002223">
    <property type="entry name" value="PRK01117.1"/>
    <property type="match status" value="1"/>
</dbReference>
<dbReference type="NCBIfam" id="TIGR00184">
    <property type="entry name" value="purA"/>
    <property type="match status" value="1"/>
</dbReference>
<dbReference type="PANTHER" id="PTHR11846">
    <property type="entry name" value="ADENYLOSUCCINATE SYNTHETASE"/>
    <property type="match status" value="1"/>
</dbReference>
<dbReference type="PANTHER" id="PTHR11846:SF0">
    <property type="entry name" value="ADENYLOSUCCINATE SYNTHETASE"/>
    <property type="match status" value="1"/>
</dbReference>
<dbReference type="Pfam" id="PF00709">
    <property type="entry name" value="Adenylsucc_synt"/>
    <property type="match status" value="1"/>
</dbReference>
<dbReference type="SMART" id="SM00788">
    <property type="entry name" value="Adenylsucc_synt"/>
    <property type="match status" value="1"/>
</dbReference>
<dbReference type="SUPFAM" id="SSF52540">
    <property type="entry name" value="P-loop containing nucleoside triphosphate hydrolases"/>
    <property type="match status" value="1"/>
</dbReference>
<dbReference type="PROSITE" id="PS01266">
    <property type="entry name" value="ADENYLOSUCCIN_SYN_1"/>
    <property type="match status" value="1"/>
</dbReference>
<dbReference type="PROSITE" id="PS00513">
    <property type="entry name" value="ADENYLOSUCCIN_SYN_2"/>
    <property type="match status" value="1"/>
</dbReference>
<organism>
    <name type="scientific">Streptococcus uberis (strain ATCC BAA-854 / 0140J)</name>
    <dbReference type="NCBI Taxonomy" id="218495"/>
    <lineage>
        <taxon>Bacteria</taxon>
        <taxon>Bacillati</taxon>
        <taxon>Bacillota</taxon>
        <taxon>Bacilli</taxon>
        <taxon>Lactobacillales</taxon>
        <taxon>Streptococcaceae</taxon>
        <taxon>Streptococcus</taxon>
    </lineage>
</organism>
<feature type="chain" id="PRO_1000116488" description="Adenylosuccinate synthetase">
    <location>
        <begin position="1"/>
        <end position="430"/>
    </location>
</feature>
<feature type="active site" description="Proton acceptor" evidence="1">
    <location>
        <position position="13"/>
    </location>
</feature>
<feature type="active site" description="Proton donor" evidence="1">
    <location>
        <position position="41"/>
    </location>
</feature>
<feature type="binding site" evidence="1">
    <location>
        <begin position="12"/>
        <end position="18"/>
    </location>
    <ligand>
        <name>GTP</name>
        <dbReference type="ChEBI" id="CHEBI:37565"/>
    </ligand>
</feature>
<feature type="binding site" description="in other chain" evidence="1">
    <location>
        <begin position="13"/>
        <end position="16"/>
    </location>
    <ligand>
        <name>IMP</name>
        <dbReference type="ChEBI" id="CHEBI:58053"/>
        <note>ligand shared between dimeric partners</note>
    </ligand>
</feature>
<feature type="binding site" evidence="1">
    <location>
        <position position="13"/>
    </location>
    <ligand>
        <name>Mg(2+)</name>
        <dbReference type="ChEBI" id="CHEBI:18420"/>
    </ligand>
</feature>
<feature type="binding site" description="in other chain" evidence="1">
    <location>
        <begin position="38"/>
        <end position="41"/>
    </location>
    <ligand>
        <name>IMP</name>
        <dbReference type="ChEBI" id="CHEBI:58053"/>
        <note>ligand shared between dimeric partners</note>
    </ligand>
</feature>
<feature type="binding site" evidence="1">
    <location>
        <begin position="40"/>
        <end position="42"/>
    </location>
    <ligand>
        <name>GTP</name>
        <dbReference type="ChEBI" id="CHEBI:37565"/>
    </ligand>
</feature>
<feature type="binding site" evidence="1">
    <location>
        <position position="40"/>
    </location>
    <ligand>
        <name>Mg(2+)</name>
        <dbReference type="ChEBI" id="CHEBI:18420"/>
    </ligand>
</feature>
<feature type="binding site" description="in other chain" evidence="1">
    <location>
        <position position="128"/>
    </location>
    <ligand>
        <name>IMP</name>
        <dbReference type="ChEBI" id="CHEBI:58053"/>
        <note>ligand shared between dimeric partners</note>
    </ligand>
</feature>
<feature type="binding site" evidence="1">
    <location>
        <position position="142"/>
    </location>
    <ligand>
        <name>IMP</name>
        <dbReference type="ChEBI" id="CHEBI:58053"/>
        <note>ligand shared between dimeric partners</note>
    </ligand>
</feature>
<feature type="binding site" description="in other chain" evidence="1">
    <location>
        <position position="223"/>
    </location>
    <ligand>
        <name>IMP</name>
        <dbReference type="ChEBI" id="CHEBI:58053"/>
        <note>ligand shared between dimeric partners</note>
    </ligand>
</feature>
<feature type="binding site" description="in other chain" evidence="1">
    <location>
        <position position="238"/>
    </location>
    <ligand>
        <name>IMP</name>
        <dbReference type="ChEBI" id="CHEBI:58053"/>
        <note>ligand shared between dimeric partners</note>
    </ligand>
</feature>
<feature type="binding site" evidence="1">
    <location>
        <begin position="298"/>
        <end position="304"/>
    </location>
    <ligand>
        <name>substrate</name>
    </ligand>
</feature>
<feature type="binding site" description="in other chain" evidence="1">
    <location>
        <position position="302"/>
    </location>
    <ligand>
        <name>IMP</name>
        <dbReference type="ChEBI" id="CHEBI:58053"/>
        <note>ligand shared between dimeric partners</note>
    </ligand>
</feature>
<feature type="binding site" evidence="1">
    <location>
        <position position="304"/>
    </location>
    <ligand>
        <name>GTP</name>
        <dbReference type="ChEBI" id="CHEBI:37565"/>
    </ligand>
</feature>
<feature type="binding site" evidence="1">
    <location>
        <begin position="330"/>
        <end position="332"/>
    </location>
    <ligand>
        <name>GTP</name>
        <dbReference type="ChEBI" id="CHEBI:37565"/>
    </ligand>
</feature>
<feature type="binding site" evidence="1">
    <location>
        <begin position="412"/>
        <end position="414"/>
    </location>
    <ligand>
        <name>GTP</name>
        <dbReference type="ChEBI" id="CHEBI:37565"/>
    </ligand>
</feature>